<reference key="1">
    <citation type="journal article" date="2007" name="Nature">
        <title>Evolution of genes and genomes on the Drosophila phylogeny.</title>
        <authorList>
            <consortium name="Drosophila 12 genomes consortium"/>
        </authorList>
    </citation>
    <scope>NUCLEOTIDE SEQUENCE [LARGE SCALE GENOMIC DNA]</scope>
    <source>
        <strain>MSH-3 / Tucson 14011-0111.49</strain>
    </source>
</reference>
<accession>B4GP48</accession>
<comment type="cofactor">
    <cofactor evidence="1">
        <name>a divalent metal cation</name>
        <dbReference type="ChEBI" id="CHEBI:60240"/>
    </cofactor>
    <text evidence="1">Binds 2 divalent metal cations per subunit.</text>
</comment>
<comment type="similarity">
    <text evidence="2">Belongs to the metallo-dependent hydrolases superfamily. Phosphotriesterase family.</text>
</comment>
<evidence type="ECO:0000250" key="1">
    <source>
        <dbReference type="UniProtKB" id="P45548"/>
    </source>
</evidence>
<evidence type="ECO:0000255" key="2">
    <source>
        <dbReference type="PROSITE-ProRule" id="PRU00679"/>
    </source>
</evidence>
<gene>
    <name type="ORF">GL13816</name>
</gene>
<name>PTER_DROPE</name>
<proteinExistence type="inferred from homology"/>
<keyword id="KW-0378">Hydrolase</keyword>
<keyword id="KW-0479">Metal-binding</keyword>
<keyword id="KW-1185">Reference proteome</keyword>
<sequence length="350" mass="39489">MTAVETVLGSITPNLLGRTLTHEHVALDFEHFYRPPPADFESELKAKISMSTLGYVRLYPYSSKENVRFYDEEALEAAKKDVLLYKKHGGGSIVENSSYGLKRNLEFIVELAKSTGVHFIAGTGHYIHAVQDASHASLTVEQMSDLYTKDILTGIEIKGKMVKCGFIGEVASVYPIHEFEKNSIKATGEIQEVLGCGVSFHPHRDAQAPFDIMRLYLEAGGRAQKCVMSHLDRTLFKIEQLVELSELGCYLQYDLFGTECSYYQLNTNVDMISDGQRIENLMKLIEEGLLDRLLMSHDIHTKHRLTSYGGHGYHHIHTNILPRMFARGVTLEQVEQMTVTNPANWLSFDP</sequence>
<protein>
    <recommendedName>
        <fullName>Phosphotriesterase-related protein</fullName>
        <ecNumber>3.1.-.-</ecNumber>
    </recommendedName>
    <alternativeName>
        <fullName>Parathion hydrolase-related protein</fullName>
    </alternativeName>
</protein>
<feature type="chain" id="PRO_0000388677" description="Phosphotriesterase-related protein">
    <location>
        <begin position="1"/>
        <end position="350"/>
    </location>
</feature>
<feature type="binding site" evidence="1">
    <location>
        <position position="22"/>
    </location>
    <ligand>
        <name>a divalent metal cation</name>
        <dbReference type="ChEBI" id="CHEBI:60240"/>
        <label>1</label>
    </ligand>
</feature>
<feature type="binding site" evidence="1">
    <location>
        <position position="24"/>
    </location>
    <ligand>
        <name>a divalent metal cation</name>
        <dbReference type="ChEBI" id="CHEBI:60240"/>
        <label>1</label>
    </ligand>
</feature>
<feature type="binding site" evidence="1">
    <location>
        <position position="169"/>
    </location>
    <ligand>
        <name>a divalent metal cation</name>
        <dbReference type="ChEBI" id="CHEBI:60240"/>
        <label>1</label>
    </ligand>
</feature>
<feature type="binding site" evidence="1">
    <location>
        <position position="169"/>
    </location>
    <ligand>
        <name>a divalent metal cation</name>
        <dbReference type="ChEBI" id="CHEBI:60240"/>
        <label>2</label>
    </ligand>
</feature>
<feature type="binding site" evidence="1">
    <location>
        <position position="201"/>
    </location>
    <ligand>
        <name>a divalent metal cation</name>
        <dbReference type="ChEBI" id="CHEBI:60240"/>
        <label>2</label>
    </ligand>
</feature>
<feature type="binding site" evidence="1">
    <location>
        <position position="230"/>
    </location>
    <ligand>
        <name>a divalent metal cation</name>
        <dbReference type="ChEBI" id="CHEBI:60240"/>
        <label>2</label>
    </ligand>
</feature>
<feature type="binding site" evidence="1">
    <location>
        <position position="298"/>
    </location>
    <ligand>
        <name>a divalent metal cation</name>
        <dbReference type="ChEBI" id="CHEBI:60240"/>
        <label>1</label>
    </ligand>
</feature>
<organism>
    <name type="scientific">Drosophila persimilis</name>
    <name type="common">Fruit fly</name>
    <dbReference type="NCBI Taxonomy" id="7234"/>
    <lineage>
        <taxon>Eukaryota</taxon>
        <taxon>Metazoa</taxon>
        <taxon>Ecdysozoa</taxon>
        <taxon>Arthropoda</taxon>
        <taxon>Hexapoda</taxon>
        <taxon>Insecta</taxon>
        <taxon>Pterygota</taxon>
        <taxon>Neoptera</taxon>
        <taxon>Endopterygota</taxon>
        <taxon>Diptera</taxon>
        <taxon>Brachycera</taxon>
        <taxon>Muscomorpha</taxon>
        <taxon>Ephydroidea</taxon>
        <taxon>Drosophilidae</taxon>
        <taxon>Drosophila</taxon>
        <taxon>Sophophora</taxon>
    </lineage>
</organism>
<dbReference type="EC" id="3.1.-.-"/>
<dbReference type="EMBL" id="CH479186">
    <property type="protein sequence ID" value="EDW38931.1"/>
    <property type="molecule type" value="Genomic_DNA"/>
</dbReference>
<dbReference type="SMR" id="B4GP48"/>
<dbReference type="STRING" id="7234.B4GP48"/>
<dbReference type="EnsemblMetazoa" id="FBtr0179431">
    <property type="protein sequence ID" value="FBpp0177923"/>
    <property type="gene ID" value="FBgn0151421"/>
</dbReference>
<dbReference type="EnsemblMetazoa" id="XM_002020083.2">
    <property type="protein sequence ID" value="XP_002020119.1"/>
    <property type="gene ID" value="LOC6594911"/>
</dbReference>
<dbReference type="GeneID" id="6594911"/>
<dbReference type="KEGG" id="dpe:6594911"/>
<dbReference type="eggNOG" id="ENOG502QQQR">
    <property type="taxonomic scope" value="Eukaryota"/>
</dbReference>
<dbReference type="HOGENOM" id="CLU_054760_0_1_1"/>
<dbReference type="OMA" id="MVKCGFI"/>
<dbReference type="OrthoDB" id="9998343at2759"/>
<dbReference type="PhylomeDB" id="B4GP48"/>
<dbReference type="Proteomes" id="UP000008744">
    <property type="component" value="Unassembled WGS sequence"/>
</dbReference>
<dbReference type="GO" id="GO:0016788">
    <property type="term" value="F:hydrolase activity, acting on ester bonds"/>
    <property type="evidence" value="ECO:0007669"/>
    <property type="project" value="InterPro"/>
</dbReference>
<dbReference type="GO" id="GO:0008270">
    <property type="term" value="F:zinc ion binding"/>
    <property type="evidence" value="ECO:0007669"/>
    <property type="project" value="InterPro"/>
</dbReference>
<dbReference type="GO" id="GO:0009056">
    <property type="term" value="P:catabolic process"/>
    <property type="evidence" value="ECO:0007669"/>
    <property type="project" value="InterPro"/>
</dbReference>
<dbReference type="CDD" id="cd00530">
    <property type="entry name" value="PTE"/>
    <property type="match status" value="1"/>
</dbReference>
<dbReference type="Gene3D" id="3.20.20.140">
    <property type="entry name" value="Metal-dependent hydrolases"/>
    <property type="match status" value="1"/>
</dbReference>
<dbReference type="InterPro" id="IPR017947">
    <property type="entry name" value="AryldialkylPase_Zn-BS"/>
</dbReference>
<dbReference type="InterPro" id="IPR032466">
    <property type="entry name" value="Metal_Hydrolase"/>
</dbReference>
<dbReference type="InterPro" id="IPR001559">
    <property type="entry name" value="Phosphotriesterase"/>
</dbReference>
<dbReference type="PANTHER" id="PTHR10819">
    <property type="entry name" value="PHOSPHOTRIESTERASE-RELATED"/>
    <property type="match status" value="1"/>
</dbReference>
<dbReference type="PANTHER" id="PTHR10819:SF3">
    <property type="entry name" value="PHOSPHOTRIESTERASE-RELATED PROTEIN"/>
    <property type="match status" value="1"/>
</dbReference>
<dbReference type="Pfam" id="PF02126">
    <property type="entry name" value="PTE"/>
    <property type="match status" value="1"/>
</dbReference>
<dbReference type="SUPFAM" id="SSF51556">
    <property type="entry name" value="Metallo-dependent hydrolases"/>
    <property type="match status" value="1"/>
</dbReference>
<dbReference type="PROSITE" id="PS01322">
    <property type="entry name" value="PHOSPHOTRIESTERASE_1"/>
    <property type="match status" value="1"/>
</dbReference>
<dbReference type="PROSITE" id="PS51347">
    <property type="entry name" value="PHOSPHOTRIESTERASE_2"/>
    <property type="match status" value="1"/>
</dbReference>